<reference key="1">
    <citation type="submission" date="2006-10" db="EMBL/GenBank/DDBJ databases">
        <title>DNA sequences of macaque genes expressed in brain or testis and its evolutionary implications.</title>
        <authorList>
            <consortium name="International consortium for macaque cDNA sequencing and analysis"/>
        </authorList>
    </citation>
    <scope>NUCLEOTIDE SEQUENCE [LARGE SCALE MRNA]</scope>
    <source>
        <tissue>Testis</tissue>
    </source>
</reference>
<protein>
    <recommendedName>
        <fullName>Uncharacterized protein C16orf46 homolog</fullName>
    </recommendedName>
</protein>
<gene>
    <name type="ORF">QtsA-10979</name>
</gene>
<organism>
    <name type="scientific">Macaca fascicularis</name>
    <name type="common">Crab-eating macaque</name>
    <name type="synonym">Cynomolgus monkey</name>
    <dbReference type="NCBI Taxonomy" id="9541"/>
    <lineage>
        <taxon>Eukaryota</taxon>
        <taxon>Metazoa</taxon>
        <taxon>Chordata</taxon>
        <taxon>Craniata</taxon>
        <taxon>Vertebrata</taxon>
        <taxon>Euteleostomi</taxon>
        <taxon>Mammalia</taxon>
        <taxon>Eutheria</taxon>
        <taxon>Euarchontoglires</taxon>
        <taxon>Primates</taxon>
        <taxon>Haplorrhini</taxon>
        <taxon>Catarrhini</taxon>
        <taxon>Cercopithecidae</taxon>
        <taxon>Cercopithecinae</taxon>
        <taxon>Macaca</taxon>
    </lineage>
</organism>
<accession>Q4R912</accession>
<evidence type="ECO:0000256" key="1">
    <source>
        <dbReference type="SAM" id="MobiDB-lite"/>
    </source>
</evidence>
<proteinExistence type="evidence at transcript level"/>
<sequence>MDLCQKNETDLENGENNEIQSTEETEPTCTCPDGRSEKNHVCCLLDISDITLEQDVKAEEFIIGTGWEEAVQGWGRTSPAACIWPRKLPKKARVGEGACSDCLVCLNLAHRSLETKPPTEGGPEKDQSSPSQTQAAPQGPSTASRAISNICFPTYFRTEKKSLQIKEFIWCTEDWAISDSSRGKALRNPSGGAHRGLSIPGPLTSRALLVLPPLKASLSNALDVLGKKSKNSFLQSEEKVLSVEKDGCLACAYGLKTADGKGEKRPSELAKHTVVNDTPSSPSPAARTSLLTDPEQCCLHWSLLSEKNLACPSDSSNVRYLAALQLLQKRGVQNYKSKFQAKDPRPPVITQKAKQENSPQMLETKVFTRPLLPSLTHRKKKIK</sequence>
<dbReference type="EMBL" id="AB168285">
    <property type="protein sequence ID" value="BAE00409.1"/>
    <property type="molecule type" value="mRNA"/>
</dbReference>
<dbReference type="RefSeq" id="NP_001272192.1">
    <property type="nucleotide sequence ID" value="NM_001285263.1"/>
</dbReference>
<dbReference type="SMR" id="Q4R912"/>
<dbReference type="STRING" id="9541.ENSMFAP00000041504"/>
<dbReference type="eggNOG" id="ENOG502SE77">
    <property type="taxonomic scope" value="Eukaryota"/>
</dbReference>
<dbReference type="Proteomes" id="UP000233100">
    <property type="component" value="Unplaced"/>
</dbReference>
<dbReference type="InterPro" id="IPR027836">
    <property type="entry name" value="DUF4529"/>
</dbReference>
<dbReference type="PANTHER" id="PTHR36869">
    <property type="entry name" value="CHROMOSOME 16 OPEN READING FRAME 46"/>
    <property type="match status" value="1"/>
</dbReference>
<dbReference type="PANTHER" id="PTHR36869:SF1">
    <property type="entry name" value="CHROMOSOME 16 OPEN READING FRAME 46"/>
    <property type="match status" value="1"/>
</dbReference>
<dbReference type="Pfam" id="PF15032">
    <property type="entry name" value="DUF4529"/>
    <property type="match status" value="1"/>
</dbReference>
<feature type="chain" id="PRO_0000279430" description="Uncharacterized protein C16orf46 homolog">
    <location>
        <begin position="1"/>
        <end position="383"/>
    </location>
</feature>
<feature type="region of interest" description="Disordered" evidence="1">
    <location>
        <begin position="1"/>
        <end position="30"/>
    </location>
</feature>
<feature type="region of interest" description="Disordered" evidence="1">
    <location>
        <begin position="114"/>
        <end position="144"/>
    </location>
</feature>
<feature type="region of interest" description="Disordered" evidence="1">
    <location>
        <begin position="262"/>
        <end position="289"/>
    </location>
</feature>
<feature type="region of interest" description="Disordered" evidence="1">
    <location>
        <begin position="341"/>
        <end position="360"/>
    </location>
</feature>
<feature type="compositionally biased region" description="Acidic residues" evidence="1">
    <location>
        <begin position="10"/>
        <end position="26"/>
    </location>
</feature>
<feature type="compositionally biased region" description="Low complexity" evidence="1">
    <location>
        <begin position="128"/>
        <end position="141"/>
    </location>
</feature>
<feature type="compositionally biased region" description="Basic and acidic residues" evidence="1">
    <location>
        <begin position="262"/>
        <end position="271"/>
    </location>
</feature>
<keyword id="KW-1185">Reference proteome</keyword>
<name>CP046_MACFA</name>